<dbReference type="EC" id="1.1.1.17" evidence="1"/>
<dbReference type="EMBL" id="CP001396">
    <property type="protein sequence ID" value="ACR63720.1"/>
    <property type="molecule type" value="Genomic_DNA"/>
</dbReference>
<dbReference type="RefSeq" id="WP_000645439.1">
    <property type="nucleotide sequence ID" value="NC_012759.1"/>
</dbReference>
<dbReference type="SMR" id="C4ZXJ1"/>
<dbReference type="KEGG" id="ebw:BWG_3290"/>
<dbReference type="HOGENOM" id="CLU_036089_2_0_6"/>
<dbReference type="GO" id="GO:0005829">
    <property type="term" value="C:cytosol"/>
    <property type="evidence" value="ECO:0007669"/>
    <property type="project" value="TreeGrafter"/>
</dbReference>
<dbReference type="GO" id="GO:0008926">
    <property type="term" value="F:mannitol-1-phosphate 5-dehydrogenase activity"/>
    <property type="evidence" value="ECO:0007669"/>
    <property type="project" value="UniProtKB-UniRule"/>
</dbReference>
<dbReference type="GO" id="GO:0019592">
    <property type="term" value="P:mannitol catabolic process"/>
    <property type="evidence" value="ECO:0007669"/>
    <property type="project" value="TreeGrafter"/>
</dbReference>
<dbReference type="FunFam" id="1.10.1040.10:FF:000009">
    <property type="entry name" value="Mannitol-1-phosphate 5-dehydrogenase"/>
    <property type="match status" value="1"/>
</dbReference>
<dbReference type="FunFam" id="3.40.50.720:FF:000075">
    <property type="entry name" value="Mannitol-1-phosphate 5-dehydrogenase"/>
    <property type="match status" value="1"/>
</dbReference>
<dbReference type="Gene3D" id="1.10.1040.10">
    <property type="entry name" value="N-(1-d-carboxylethyl)-l-norvaline Dehydrogenase, domain 2"/>
    <property type="match status" value="1"/>
</dbReference>
<dbReference type="Gene3D" id="3.40.50.720">
    <property type="entry name" value="NAD(P)-binding Rossmann-like Domain"/>
    <property type="match status" value="1"/>
</dbReference>
<dbReference type="HAMAP" id="MF_00196">
    <property type="entry name" value="Mannitol_dehydrog"/>
    <property type="match status" value="1"/>
</dbReference>
<dbReference type="InterPro" id="IPR008927">
    <property type="entry name" value="6-PGluconate_DH-like_C_sf"/>
</dbReference>
<dbReference type="InterPro" id="IPR013328">
    <property type="entry name" value="6PGD_dom2"/>
</dbReference>
<dbReference type="InterPro" id="IPR023028">
    <property type="entry name" value="Mannitol_1_phos_5_DH"/>
</dbReference>
<dbReference type="InterPro" id="IPR000669">
    <property type="entry name" value="Mannitol_DH"/>
</dbReference>
<dbReference type="InterPro" id="IPR013118">
    <property type="entry name" value="Mannitol_DH_C"/>
</dbReference>
<dbReference type="InterPro" id="IPR023027">
    <property type="entry name" value="Mannitol_DH_CS"/>
</dbReference>
<dbReference type="InterPro" id="IPR013131">
    <property type="entry name" value="Mannitol_DH_N"/>
</dbReference>
<dbReference type="InterPro" id="IPR036291">
    <property type="entry name" value="NAD(P)-bd_dom_sf"/>
</dbReference>
<dbReference type="NCBIfam" id="NF002646">
    <property type="entry name" value="PRK02318.1-2"/>
    <property type="match status" value="1"/>
</dbReference>
<dbReference type="NCBIfam" id="NF002647">
    <property type="entry name" value="PRK02318.1-3"/>
    <property type="match status" value="1"/>
</dbReference>
<dbReference type="NCBIfam" id="NF002648">
    <property type="entry name" value="PRK02318.1-4"/>
    <property type="match status" value="1"/>
</dbReference>
<dbReference type="NCBIfam" id="NF002650">
    <property type="entry name" value="PRK02318.2-2"/>
    <property type="match status" value="1"/>
</dbReference>
<dbReference type="NCBIfam" id="NF002652">
    <property type="entry name" value="PRK02318.2-5"/>
    <property type="match status" value="1"/>
</dbReference>
<dbReference type="PANTHER" id="PTHR30524:SF0">
    <property type="entry name" value="ALTRONATE OXIDOREDUCTASE-RELATED"/>
    <property type="match status" value="1"/>
</dbReference>
<dbReference type="PANTHER" id="PTHR30524">
    <property type="entry name" value="MANNITOL-1-PHOSPHATE 5-DEHYDROGENASE"/>
    <property type="match status" value="1"/>
</dbReference>
<dbReference type="Pfam" id="PF01232">
    <property type="entry name" value="Mannitol_dh"/>
    <property type="match status" value="1"/>
</dbReference>
<dbReference type="Pfam" id="PF08125">
    <property type="entry name" value="Mannitol_dh_C"/>
    <property type="match status" value="1"/>
</dbReference>
<dbReference type="PRINTS" id="PR00084">
    <property type="entry name" value="MTLDHDRGNASE"/>
</dbReference>
<dbReference type="SUPFAM" id="SSF48179">
    <property type="entry name" value="6-phosphogluconate dehydrogenase C-terminal domain-like"/>
    <property type="match status" value="1"/>
</dbReference>
<dbReference type="SUPFAM" id="SSF51735">
    <property type="entry name" value="NAD(P)-binding Rossmann-fold domains"/>
    <property type="match status" value="1"/>
</dbReference>
<dbReference type="PROSITE" id="PS00974">
    <property type="entry name" value="MANNITOL_DHGENASE"/>
    <property type="match status" value="1"/>
</dbReference>
<comment type="catalytic activity">
    <reaction evidence="1">
        <text>D-mannitol 1-phosphate + NAD(+) = beta-D-fructose 6-phosphate + NADH + H(+)</text>
        <dbReference type="Rhea" id="RHEA:19661"/>
        <dbReference type="ChEBI" id="CHEBI:15378"/>
        <dbReference type="ChEBI" id="CHEBI:57540"/>
        <dbReference type="ChEBI" id="CHEBI:57634"/>
        <dbReference type="ChEBI" id="CHEBI:57945"/>
        <dbReference type="ChEBI" id="CHEBI:61381"/>
        <dbReference type="EC" id="1.1.1.17"/>
    </reaction>
</comment>
<comment type="similarity">
    <text evidence="1">Belongs to the mannitol dehydrogenase family.</text>
</comment>
<gene>
    <name evidence="1" type="primary">mtlD</name>
    <name type="ordered locus">BWG_3290</name>
</gene>
<sequence length="382" mass="41139">MKALHFGAGNIGRGFIGKLLADAGIQLTFADVNQVVLDALNARHSYQVHVVGETEQVDTVSGVNAVSSIGDDVVDLIAQVDLVTTAVGPVVLERIAPAIAKGQVKRKEQGNESPLNIIACENMVRGTTQLKGHVMNALPEDAKAWVEEHVGFVDSAVDRIVPPSASATNDPLEVTVETFSEWIVDKTQFKGALPNIPGMELTDNLMAFVERKLFTLNTGHAITAYLGKLAGHQTIRDAILDEKIRAVVKGAMEESGAVLIKRYGFDADKHAAYIQKILGRFENPYLKDDVERVGRQPLRKLSAGDRLIKPLLGTLEYGLPHKNLIEGIAAAMHFRSEDDPQAQELAALIADKGPQAALAQISGLDANSEVVSEAVTAYKAMQ</sequence>
<organism>
    <name type="scientific">Escherichia coli (strain K12 / MC4100 / BW2952)</name>
    <dbReference type="NCBI Taxonomy" id="595496"/>
    <lineage>
        <taxon>Bacteria</taxon>
        <taxon>Pseudomonadati</taxon>
        <taxon>Pseudomonadota</taxon>
        <taxon>Gammaproteobacteria</taxon>
        <taxon>Enterobacterales</taxon>
        <taxon>Enterobacteriaceae</taxon>
        <taxon>Escherichia</taxon>
    </lineage>
</organism>
<keyword id="KW-0007">Acetylation</keyword>
<keyword id="KW-0520">NAD</keyword>
<keyword id="KW-0560">Oxidoreductase</keyword>
<feature type="chain" id="PRO_1000204051" description="Mannitol-1-phosphate 5-dehydrogenase">
    <location>
        <begin position="1"/>
        <end position="382"/>
    </location>
</feature>
<feature type="binding site" evidence="1">
    <location>
        <begin position="3"/>
        <end position="14"/>
    </location>
    <ligand>
        <name>NAD(+)</name>
        <dbReference type="ChEBI" id="CHEBI:57540"/>
    </ligand>
</feature>
<feature type="modified residue" description="N6-acetyllysine" evidence="1">
    <location>
        <position position="269"/>
    </location>
</feature>
<protein>
    <recommendedName>
        <fullName evidence="1">Mannitol-1-phosphate 5-dehydrogenase</fullName>
        <ecNumber evidence="1">1.1.1.17</ecNumber>
    </recommendedName>
</protein>
<evidence type="ECO:0000255" key="1">
    <source>
        <dbReference type="HAMAP-Rule" id="MF_00196"/>
    </source>
</evidence>
<accession>C4ZXJ1</accession>
<name>MTLD_ECOBW</name>
<proteinExistence type="inferred from homology"/>
<reference key="1">
    <citation type="journal article" date="2009" name="J. Bacteriol.">
        <title>Genomic sequencing reveals regulatory mutations and recombinational events in the widely used MC4100 lineage of Escherichia coli K-12.</title>
        <authorList>
            <person name="Ferenci T."/>
            <person name="Zhou Z."/>
            <person name="Betteridge T."/>
            <person name="Ren Y."/>
            <person name="Liu Y."/>
            <person name="Feng L."/>
            <person name="Reeves P.R."/>
            <person name="Wang L."/>
        </authorList>
    </citation>
    <scope>NUCLEOTIDE SEQUENCE [LARGE SCALE GENOMIC DNA]</scope>
    <source>
        <strain>K12 / MC4100 / BW2952</strain>
    </source>
</reference>